<evidence type="ECO:0000255" key="1">
    <source>
        <dbReference type="HAMAP-Rule" id="MF_00501"/>
    </source>
</evidence>
<evidence type="ECO:0000305" key="2"/>
<name>RL31_MANSM</name>
<protein>
    <recommendedName>
        <fullName evidence="1">Large ribosomal subunit protein bL31</fullName>
    </recommendedName>
    <alternativeName>
        <fullName evidence="2">50S ribosomal protein L31</fullName>
    </alternativeName>
</protein>
<reference key="1">
    <citation type="journal article" date="2004" name="Nat. Biotechnol.">
        <title>The genome sequence of the capnophilic rumen bacterium Mannheimia succiniciproducens.</title>
        <authorList>
            <person name="Hong S.H."/>
            <person name="Kim J.S."/>
            <person name="Lee S.Y."/>
            <person name="In Y.H."/>
            <person name="Choi S.S."/>
            <person name="Rih J.-K."/>
            <person name="Kim C.H."/>
            <person name="Jeong H."/>
            <person name="Hur C.G."/>
            <person name="Kim J.J."/>
        </authorList>
    </citation>
    <scope>NUCLEOTIDE SEQUENCE [LARGE SCALE GENOMIC DNA]</scope>
    <source>
        <strain>KCTC 0769BP / MBEL55E</strain>
    </source>
</reference>
<organism>
    <name type="scientific">Mannheimia succiniciproducens (strain KCTC 0769BP / MBEL55E)</name>
    <dbReference type="NCBI Taxonomy" id="221988"/>
    <lineage>
        <taxon>Bacteria</taxon>
        <taxon>Pseudomonadati</taxon>
        <taxon>Pseudomonadota</taxon>
        <taxon>Gammaproteobacteria</taxon>
        <taxon>Pasteurellales</taxon>
        <taxon>Pasteurellaceae</taxon>
        <taxon>Basfia</taxon>
    </lineage>
</organism>
<proteinExistence type="inferred from homology"/>
<feature type="chain" id="PRO_0000173123" description="Large ribosomal subunit protein bL31">
    <location>
        <begin position="1"/>
        <end position="71"/>
    </location>
</feature>
<feature type="binding site" evidence="1">
    <location>
        <position position="16"/>
    </location>
    <ligand>
        <name>Zn(2+)</name>
        <dbReference type="ChEBI" id="CHEBI:29105"/>
    </ligand>
</feature>
<feature type="binding site" evidence="1">
    <location>
        <position position="18"/>
    </location>
    <ligand>
        <name>Zn(2+)</name>
        <dbReference type="ChEBI" id="CHEBI:29105"/>
    </ligand>
</feature>
<feature type="binding site" evidence="1">
    <location>
        <position position="37"/>
    </location>
    <ligand>
        <name>Zn(2+)</name>
        <dbReference type="ChEBI" id="CHEBI:29105"/>
    </ligand>
</feature>
<feature type="binding site" evidence="1">
    <location>
        <position position="40"/>
    </location>
    <ligand>
        <name>Zn(2+)</name>
        <dbReference type="ChEBI" id="CHEBI:29105"/>
    </ligand>
</feature>
<keyword id="KW-0479">Metal-binding</keyword>
<keyword id="KW-0687">Ribonucleoprotein</keyword>
<keyword id="KW-0689">Ribosomal protein</keyword>
<keyword id="KW-0694">RNA-binding</keyword>
<keyword id="KW-0699">rRNA-binding</keyword>
<keyword id="KW-0862">Zinc</keyword>
<dbReference type="EMBL" id="AE016827">
    <property type="protein sequence ID" value="AAU37055.1"/>
    <property type="status" value="ALT_INIT"/>
    <property type="molecule type" value="Genomic_DNA"/>
</dbReference>
<dbReference type="RefSeq" id="WP_041639530.1">
    <property type="nucleotide sequence ID" value="NC_006300.1"/>
</dbReference>
<dbReference type="SMR" id="Q65VF5"/>
<dbReference type="STRING" id="221988.MS0448"/>
<dbReference type="KEGG" id="msu:MS0448"/>
<dbReference type="eggNOG" id="COG0254">
    <property type="taxonomic scope" value="Bacteria"/>
</dbReference>
<dbReference type="HOGENOM" id="CLU_114306_4_0_6"/>
<dbReference type="OrthoDB" id="9803251at2"/>
<dbReference type="Proteomes" id="UP000000607">
    <property type="component" value="Chromosome"/>
</dbReference>
<dbReference type="GO" id="GO:1990904">
    <property type="term" value="C:ribonucleoprotein complex"/>
    <property type="evidence" value="ECO:0007669"/>
    <property type="project" value="UniProtKB-KW"/>
</dbReference>
<dbReference type="GO" id="GO:0005840">
    <property type="term" value="C:ribosome"/>
    <property type="evidence" value="ECO:0007669"/>
    <property type="project" value="UniProtKB-KW"/>
</dbReference>
<dbReference type="GO" id="GO:0046872">
    <property type="term" value="F:metal ion binding"/>
    <property type="evidence" value="ECO:0007669"/>
    <property type="project" value="UniProtKB-KW"/>
</dbReference>
<dbReference type="GO" id="GO:0019843">
    <property type="term" value="F:rRNA binding"/>
    <property type="evidence" value="ECO:0007669"/>
    <property type="project" value="UniProtKB-KW"/>
</dbReference>
<dbReference type="GO" id="GO:0003735">
    <property type="term" value="F:structural constituent of ribosome"/>
    <property type="evidence" value="ECO:0007669"/>
    <property type="project" value="InterPro"/>
</dbReference>
<dbReference type="GO" id="GO:0006412">
    <property type="term" value="P:translation"/>
    <property type="evidence" value="ECO:0007669"/>
    <property type="project" value="UniProtKB-UniRule"/>
</dbReference>
<dbReference type="FunFam" id="4.10.830.30:FF:000001">
    <property type="entry name" value="50S ribosomal protein L31"/>
    <property type="match status" value="1"/>
</dbReference>
<dbReference type="Gene3D" id="4.10.830.30">
    <property type="entry name" value="Ribosomal protein L31"/>
    <property type="match status" value="1"/>
</dbReference>
<dbReference type="HAMAP" id="MF_00501">
    <property type="entry name" value="Ribosomal_bL31_1"/>
    <property type="match status" value="1"/>
</dbReference>
<dbReference type="InterPro" id="IPR034704">
    <property type="entry name" value="Ribosomal_bL28/bL31-like_sf"/>
</dbReference>
<dbReference type="InterPro" id="IPR002150">
    <property type="entry name" value="Ribosomal_bL31"/>
</dbReference>
<dbReference type="InterPro" id="IPR027491">
    <property type="entry name" value="Ribosomal_bL31_A"/>
</dbReference>
<dbReference type="InterPro" id="IPR042105">
    <property type="entry name" value="Ribosomal_bL31_sf"/>
</dbReference>
<dbReference type="NCBIfam" id="TIGR00105">
    <property type="entry name" value="L31"/>
    <property type="match status" value="1"/>
</dbReference>
<dbReference type="NCBIfam" id="NF000612">
    <property type="entry name" value="PRK00019.1"/>
    <property type="match status" value="1"/>
</dbReference>
<dbReference type="NCBIfam" id="NF001809">
    <property type="entry name" value="PRK00528.1"/>
    <property type="match status" value="1"/>
</dbReference>
<dbReference type="PANTHER" id="PTHR33280">
    <property type="entry name" value="50S RIBOSOMAL PROTEIN L31, CHLOROPLASTIC"/>
    <property type="match status" value="1"/>
</dbReference>
<dbReference type="PANTHER" id="PTHR33280:SF6">
    <property type="entry name" value="LARGE RIBOSOMAL SUBUNIT PROTEIN BL31A"/>
    <property type="match status" value="1"/>
</dbReference>
<dbReference type="Pfam" id="PF01197">
    <property type="entry name" value="Ribosomal_L31"/>
    <property type="match status" value="1"/>
</dbReference>
<dbReference type="PRINTS" id="PR01249">
    <property type="entry name" value="RIBOSOMALL31"/>
</dbReference>
<dbReference type="SUPFAM" id="SSF143800">
    <property type="entry name" value="L28p-like"/>
    <property type="match status" value="1"/>
</dbReference>
<dbReference type="PROSITE" id="PS01143">
    <property type="entry name" value="RIBOSOMAL_L31"/>
    <property type="match status" value="1"/>
</dbReference>
<gene>
    <name evidence="1" type="primary">rpmE</name>
    <name type="ordered locus">MS0448</name>
</gene>
<comment type="function">
    <text evidence="1">Binds the 23S rRNA.</text>
</comment>
<comment type="cofactor">
    <cofactor evidence="1">
        <name>Zn(2+)</name>
        <dbReference type="ChEBI" id="CHEBI:29105"/>
    </cofactor>
    <text evidence="1">Binds 1 zinc ion per subunit.</text>
</comment>
<comment type="subunit">
    <text evidence="1">Part of the 50S ribosomal subunit.</text>
</comment>
<comment type="similarity">
    <text evidence="1">Belongs to the bacterial ribosomal protein bL31 family. Type A subfamily.</text>
</comment>
<comment type="sequence caution" evidence="2">
    <conflict type="erroneous initiation">
        <sequence resource="EMBL-CDS" id="AAU37055"/>
    </conflict>
</comment>
<sequence>MKQGIHPEYKEITVTCSCGNVIKTRSTAGHDINLDVCGNCHPFYTGKQRVVDTGGRVERFNKRFSIPGSKK</sequence>
<accession>Q65VF5</accession>